<sequence>MKQKILIRVTMTDDKTRAKAMTKAVQFKGVSAVEIKGDHRNQIEVTGVEVDMIPLIQILRKKVAFAELVSVTKVEPPKKEDEKKGGDGKGAEGKGGDQKGGDKKGPDDKEPPEPKPVPCYPWPLQGYGVPSSFPHQGYGVPSTFPQGDGVPSSFPYPCHPAHPYNDIGEPVYNHEPNCKIM</sequence>
<dbReference type="EMBL" id="AP000372">
    <property type="protein sequence ID" value="BAA98186.1"/>
    <property type="status" value="ALT_SEQ"/>
    <property type="molecule type" value="Genomic_DNA"/>
</dbReference>
<dbReference type="EMBL" id="CP002688">
    <property type="protein sequence ID" value="AED95646.1"/>
    <property type="molecule type" value="Genomic_DNA"/>
</dbReference>
<dbReference type="EMBL" id="BT002909">
    <property type="protein sequence ID" value="AAO22725.1"/>
    <property type="molecule type" value="mRNA"/>
</dbReference>
<dbReference type="EMBL" id="BT020300">
    <property type="protein sequence ID" value="AAV84521.1"/>
    <property type="molecule type" value="mRNA"/>
</dbReference>
<dbReference type="EMBL" id="BT020469">
    <property type="protein sequence ID" value="AAW38970.1"/>
    <property type="molecule type" value="mRNA"/>
</dbReference>
<dbReference type="EMBL" id="U64908">
    <property type="protein sequence ID" value="AAD09509.1"/>
    <property type="molecule type" value="mRNA"/>
</dbReference>
<dbReference type="RefSeq" id="NP_568695.1">
    <molecule id="Q5PNZ7-1"/>
    <property type="nucleotide sequence ID" value="NM_124204.4"/>
</dbReference>
<dbReference type="SMR" id="Q5PNZ7"/>
<dbReference type="FunCoup" id="Q5PNZ7">
    <property type="interactions" value="69"/>
</dbReference>
<dbReference type="PaxDb" id="3702-AT5G48290.1"/>
<dbReference type="EnsemblPlants" id="AT5G48290.1">
    <molecule id="Q5PNZ7-1"/>
    <property type="protein sequence ID" value="AT5G48290.1"/>
    <property type="gene ID" value="AT5G48290"/>
</dbReference>
<dbReference type="GeneID" id="834882"/>
<dbReference type="Gramene" id="AT5G48290.1">
    <molecule id="Q5PNZ7-1"/>
    <property type="protein sequence ID" value="AT5G48290.1"/>
    <property type="gene ID" value="AT5G48290"/>
</dbReference>
<dbReference type="KEGG" id="ath:AT5G48290"/>
<dbReference type="Araport" id="AT5G48290"/>
<dbReference type="TAIR" id="AT5G48290"/>
<dbReference type="HOGENOM" id="CLU_1680331_0_0_1"/>
<dbReference type="InParanoid" id="Q5PNZ7"/>
<dbReference type="OMA" id="TEVDMIG"/>
<dbReference type="PhylomeDB" id="Q5PNZ7"/>
<dbReference type="PRO" id="PR:Q5PNZ7"/>
<dbReference type="Proteomes" id="UP000006548">
    <property type="component" value="Chromosome 5"/>
</dbReference>
<dbReference type="ExpressionAtlas" id="Q5PNZ7">
    <property type="expression patterns" value="baseline and differential"/>
</dbReference>
<dbReference type="GO" id="GO:0046872">
    <property type="term" value="F:metal ion binding"/>
    <property type="evidence" value="ECO:0007669"/>
    <property type="project" value="UniProtKB-KW"/>
</dbReference>
<dbReference type="Gene3D" id="3.30.70.100">
    <property type="match status" value="1"/>
</dbReference>
<dbReference type="InterPro" id="IPR044296">
    <property type="entry name" value="HIPP46"/>
</dbReference>
<dbReference type="InterPro" id="IPR006121">
    <property type="entry name" value="HMA_dom"/>
</dbReference>
<dbReference type="PANTHER" id="PTHR46371">
    <property type="entry name" value="OS04G0464100 PROTEIN"/>
    <property type="match status" value="1"/>
</dbReference>
<dbReference type="PROSITE" id="PS50846">
    <property type="entry name" value="HMA_2"/>
    <property type="match status" value="1"/>
</dbReference>
<keyword id="KW-0025">Alternative splicing</keyword>
<keyword id="KW-0449">Lipoprotein</keyword>
<keyword id="KW-0479">Metal-binding</keyword>
<keyword id="KW-0488">Methylation</keyword>
<keyword id="KW-0636">Prenylation</keyword>
<keyword id="KW-1185">Reference proteome</keyword>
<comment type="function">
    <text evidence="1">Probable heavy-metal-binding protein.</text>
</comment>
<comment type="alternative products">
    <event type="alternative splicing"/>
    <isoform>
        <id>Q5PNZ7-1</id>
        <name>1</name>
        <sequence type="displayed"/>
    </isoform>
    <text evidence="8">A number of isoforms are produced. According to EST sequences.</text>
</comment>
<comment type="similarity">
    <text evidence="8">Belongs to the HIPP family.</text>
</comment>
<comment type="caution">
    <text evidence="9">Contains an apparent HMA-like domain but lacks the core conserved Cys-X-X-Cys motif.</text>
</comment>
<comment type="sequence caution" evidence="8">
    <conflict type="erroneous gene model prediction">
        <sequence resource="EMBL-CDS" id="BAA98186"/>
    </conflict>
</comment>
<name>HIP46_ARATH</name>
<gene>
    <name evidence="5 6" type="primary">HIPP46</name>
    <name evidence="7" type="synonym">FP5</name>
    <name evidence="10" type="ordered locus">At5g48290</name>
    <name evidence="12" type="ORF">K23F3.1</name>
</gene>
<feature type="chain" id="PRO_0000437864" description="Heavy metal-associated isoprenylated plant protein 46">
    <location>
        <begin position="1"/>
        <end position="178"/>
    </location>
</feature>
<feature type="propeptide" id="PRO_0000437865" description="Removed in mature form" evidence="8">
    <location>
        <begin position="179"/>
        <end position="181"/>
    </location>
</feature>
<feature type="domain" description="HMA" evidence="3">
    <location>
        <begin position="2"/>
        <end position="71"/>
    </location>
</feature>
<feature type="region of interest" description="Disordered" evidence="4">
    <location>
        <begin position="74"/>
        <end position="121"/>
    </location>
</feature>
<feature type="compositionally biased region" description="Basic and acidic residues" evidence="4">
    <location>
        <begin position="75"/>
        <end position="113"/>
    </location>
</feature>
<feature type="modified residue" description="Cysteine methyl ester" evidence="2">
    <location>
        <position position="178"/>
    </location>
</feature>
<feature type="lipid moiety-binding region" description="S-farnesyl cysteine" evidence="2">
    <location>
        <position position="178"/>
    </location>
</feature>
<feature type="sequence conflict" description="In Ref. 3; AAO22725." evidence="8" ref="3">
    <original>M</original>
    <variation>I</variation>
    <location>
        <position position="21"/>
    </location>
</feature>
<organism evidence="11">
    <name type="scientific">Arabidopsis thaliana</name>
    <name type="common">Mouse-ear cress</name>
    <dbReference type="NCBI Taxonomy" id="3702"/>
    <lineage>
        <taxon>Eukaryota</taxon>
        <taxon>Viridiplantae</taxon>
        <taxon>Streptophyta</taxon>
        <taxon>Embryophyta</taxon>
        <taxon>Tracheophyta</taxon>
        <taxon>Spermatophyta</taxon>
        <taxon>Magnoliopsida</taxon>
        <taxon>eudicotyledons</taxon>
        <taxon>Gunneridae</taxon>
        <taxon>Pentapetalae</taxon>
        <taxon>rosids</taxon>
        <taxon>malvids</taxon>
        <taxon>Brassicales</taxon>
        <taxon>Brassicaceae</taxon>
        <taxon>Camelineae</taxon>
        <taxon>Arabidopsis</taxon>
    </lineage>
</organism>
<evidence type="ECO:0000250" key="1">
    <source>
        <dbReference type="UniProtKB" id="Q9LZF1"/>
    </source>
</evidence>
<evidence type="ECO:0000250" key="2">
    <source>
        <dbReference type="UniProtKB" id="Q9SZN7"/>
    </source>
</evidence>
<evidence type="ECO:0000255" key="3">
    <source>
        <dbReference type="PROSITE-ProRule" id="PRU00280"/>
    </source>
</evidence>
<evidence type="ECO:0000256" key="4">
    <source>
        <dbReference type="SAM" id="MobiDB-lite"/>
    </source>
</evidence>
<evidence type="ECO:0000303" key="5">
    <source>
    </source>
</evidence>
<evidence type="ECO:0000303" key="6">
    <source>
    </source>
</evidence>
<evidence type="ECO:0000303" key="7">
    <source>
    </source>
</evidence>
<evidence type="ECO:0000305" key="8"/>
<evidence type="ECO:0000305" key="9">
    <source>
    </source>
</evidence>
<evidence type="ECO:0000312" key="10">
    <source>
        <dbReference type="Araport" id="AT5G48290"/>
    </source>
</evidence>
<evidence type="ECO:0000312" key="11">
    <source>
        <dbReference type="EMBL" id="AAV84521.1"/>
    </source>
</evidence>
<evidence type="ECO:0000312" key="12">
    <source>
        <dbReference type="EMBL" id="BAA98186.1"/>
    </source>
</evidence>
<proteinExistence type="evidence at transcript level"/>
<reference key="1">
    <citation type="submission" date="1999-07" db="EMBL/GenBank/DDBJ databases">
        <title>Structural analysis of Arabidopsis thaliana chromosome 5. XI.</title>
        <authorList>
            <person name="Kaneko T."/>
            <person name="Katoh T."/>
            <person name="Asamizu E."/>
            <person name="Sato S."/>
            <person name="Nakamura Y."/>
            <person name="Kotani H."/>
            <person name="Tabata S."/>
        </authorList>
    </citation>
    <scope>NUCLEOTIDE SEQUENCE [LARGE SCALE GENOMIC DNA]</scope>
    <source>
        <strain>cv. Columbia</strain>
    </source>
</reference>
<reference key="2">
    <citation type="journal article" date="2017" name="Plant J.">
        <title>Araport11: a complete reannotation of the Arabidopsis thaliana reference genome.</title>
        <authorList>
            <person name="Cheng C.Y."/>
            <person name="Krishnakumar V."/>
            <person name="Chan A.P."/>
            <person name="Thibaud-Nissen F."/>
            <person name="Schobel S."/>
            <person name="Town C.D."/>
        </authorList>
    </citation>
    <scope>GENOME REANNOTATION</scope>
    <source>
        <strain>cv. Columbia</strain>
    </source>
</reference>
<reference key="3">
    <citation type="journal article" date="2003" name="Science">
        <title>Empirical analysis of transcriptional activity in the Arabidopsis genome.</title>
        <authorList>
            <person name="Yamada K."/>
            <person name="Lim J."/>
            <person name="Dale J.M."/>
            <person name="Chen H."/>
            <person name="Shinn P."/>
            <person name="Palm C.J."/>
            <person name="Southwick A.M."/>
            <person name="Wu H.C."/>
            <person name="Kim C.J."/>
            <person name="Nguyen M."/>
            <person name="Pham P.K."/>
            <person name="Cheuk R.F."/>
            <person name="Karlin-Newmann G."/>
            <person name="Liu S.X."/>
            <person name="Lam B."/>
            <person name="Sakano H."/>
            <person name="Wu T."/>
            <person name="Yu G."/>
            <person name="Miranda M."/>
            <person name="Quach H.L."/>
            <person name="Tripp M."/>
            <person name="Chang C.H."/>
            <person name="Lee J.M."/>
            <person name="Toriumi M.J."/>
            <person name="Chan M.M."/>
            <person name="Tang C.C."/>
            <person name="Onodera C.S."/>
            <person name="Deng J.M."/>
            <person name="Akiyama K."/>
            <person name="Ansari Y."/>
            <person name="Arakawa T."/>
            <person name="Banh J."/>
            <person name="Banno F."/>
            <person name="Bowser L."/>
            <person name="Brooks S.Y."/>
            <person name="Carninci P."/>
            <person name="Chao Q."/>
            <person name="Choy N."/>
            <person name="Enju A."/>
            <person name="Goldsmith A.D."/>
            <person name="Gurjal M."/>
            <person name="Hansen N.F."/>
            <person name="Hayashizaki Y."/>
            <person name="Johnson-Hopson C."/>
            <person name="Hsuan V.W."/>
            <person name="Iida K."/>
            <person name="Karnes M."/>
            <person name="Khan S."/>
            <person name="Koesema E."/>
            <person name="Ishida J."/>
            <person name="Jiang P.X."/>
            <person name="Jones T."/>
            <person name="Kawai J."/>
            <person name="Kamiya A."/>
            <person name="Meyers C."/>
            <person name="Nakajima M."/>
            <person name="Narusaka M."/>
            <person name="Seki M."/>
            <person name="Sakurai T."/>
            <person name="Satou M."/>
            <person name="Tamse R."/>
            <person name="Vaysberg M."/>
            <person name="Wallender E.K."/>
            <person name="Wong C."/>
            <person name="Yamamura Y."/>
            <person name="Yuan S."/>
            <person name="Shinozaki K."/>
            <person name="Davis R.W."/>
            <person name="Theologis A."/>
            <person name="Ecker J.R."/>
        </authorList>
    </citation>
    <scope>NUCLEOTIDE SEQUENCE [LARGE SCALE MRNA]</scope>
    <source>
        <strain>cv. Columbia</strain>
    </source>
</reference>
<reference key="4">
    <citation type="submission" date="2005-01" db="EMBL/GenBank/DDBJ databases">
        <title>Arabidopsis ORF clones.</title>
        <authorList>
            <person name="Kim C.J."/>
            <person name="Chen H."/>
            <person name="Cheuk R."/>
            <person name="Shinn P."/>
            <person name="Ecker J.R."/>
        </authorList>
    </citation>
    <scope>NUCLEOTIDE SEQUENCE [LARGE SCALE MRNA]</scope>
    <source>
        <strain>cv. Columbia</strain>
    </source>
</reference>
<reference key="5">
    <citation type="journal article" date="1996" name="Mol. Biotechnol.">
        <title>Identification of cDNAs encoding isoprenylated proteins.</title>
        <authorList>
            <person name="Crowell D.N."/>
            <person name="Biermann B.J."/>
            <person name="Randall S.K."/>
        </authorList>
    </citation>
    <scope>NUCLEOTIDE SEQUENCE [MRNA] OF 124-181</scope>
</reference>
<reference key="6">
    <citation type="journal article" date="1999" name="Plant Mol. Biol.">
        <title>A new class of proteins capable of binding transition metals.</title>
        <authorList>
            <person name="Dykema P.E."/>
            <person name="Sipes P.R."/>
            <person name="Marie A."/>
            <person name="Biermann B.J."/>
            <person name="Crowell D.N."/>
            <person name="Randall S.K."/>
        </authorList>
    </citation>
    <scope>GENE FAMILY</scope>
</reference>
<reference key="7">
    <citation type="journal article" date="2010" name="Metallomics">
        <title>Metallochaperone-like genes in Arabidopsis thaliana.</title>
        <authorList>
            <person name="Tehseen M."/>
            <person name="Cairns N."/>
            <person name="Sherson S."/>
            <person name="Cobbett C.S."/>
        </authorList>
    </citation>
    <scope>GENE FAMILY</scope>
    <scope>NOMENCLATURE</scope>
</reference>
<reference key="8">
    <citation type="journal article" date="2013" name="FEBS J.">
        <title>Heavy metal-associated isoprenylated plant protein (HIPP): characterization of a family of proteins exclusive to plants.</title>
        <authorList>
            <person name="de Abreu-Neto J.B."/>
            <person name="Turchetto-Zolet A.C."/>
            <person name="de Oliveira L.F."/>
            <person name="Zanettini M.H."/>
            <person name="Margis-Pinheiro M."/>
        </authorList>
    </citation>
    <scope>GENE FAMILY</scope>
    <scope>NOMENCLATURE</scope>
</reference>
<accession>Q5PNZ7</accession>
<accession>Q84WQ2</accession>
<accession>Q9LK84</accession>
<accession>Q9ZRE5</accession>
<protein>
    <recommendedName>
        <fullName evidence="5 6">Heavy metal-associated isoprenylated plant protein 46</fullName>
        <shortName evidence="5 6">AtHIP46</shortName>
    </recommendedName>
    <alternativeName>
        <fullName evidence="7">Farnesylated protein 5</fullName>
        <shortName evidence="7">AtFP5</shortName>
    </alternativeName>
</protein>